<dbReference type="EC" id="3.1.11.6" evidence="1"/>
<dbReference type="EMBL" id="CP000492">
    <property type="protein sequence ID" value="ABL66434.1"/>
    <property type="molecule type" value="Genomic_DNA"/>
</dbReference>
<dbReference type="RefSeq" id="WP_011746216.1">
    <property type="nucleotide sequence ID" value="NC_008639.1"/>
</dbReference>
<dbReference type="SMR" id="A1BJ57"/>
<dbReference type="STRING" id="290317.Cpha266_2446"/>
<dbReference type="KEGG" id="cph:Cpha266_2446"/>
<dbReference type="eggNOG" id="COG1722">
    <property type="taxonomic scope" value="Bacteria"/>
</dbReference>
<dbReference type="HOGENOM" id="CLU_145918_2_1_10"/>
<dbReference type="OrthoDB" id="598486at2"/>
<dbReference type="Proteomes" id="UP000008701">
    <property type="component" value="Chromosome"/>
</dbReference>
<dbReference type="GO" id="GO:0005829">
    <property type="term" value="C:cytosol"/>
    <property type="evidence" value="ECO:0007669"/>
    <property type="project" value="TreeGrafter"/>
</dbReference>
<dbReference type="GO" id="GO:0009318">
    <property type="term" value="C:exodeoxyribonuclease VII complex"/>
    <property type="evidence" value="ECO:0007669"/>
    <property type="project" value="InterPro"/>
</dbReference>
<dbReference type="GO" id="GO:0008855">
    <property type="term" value="F:exodeoxyribonuclease VII activity"/>
    <property type="evidence" value="ECO:0007669"/>
    <property type="project" value="UniProtKB-UniRule"/>
</dbReference>
<dbReference type="GO" id="GO:0006308">
    <property type="term" value="P:DNA catabolic process"/>
    <property type="evidence" value="ECO:0007669"/>
    <property type="project" value="UniProtKB-UniRule"/>
</dbReference>
<dbReference type="Gene3D" id="1.10.287.1040">
    <property type="entry name" value="Exonuclease VII, small subunit"/>
    <property type="match status" value="1"/>
</dbReference>
<dbReference type="HAMAP" id="MF_00337">
    <property type="entry name" value="Exonuc_7_S"/>
    <property type="match status" value="1"/>
</dbReference>
<dbReference type="InterPro" id="IPR003761">
    <property type="entry name" value="Exonuc_VII_S"/>
</dbReference>
<dbReference type="InterPro" id="IPR037004">
    <property type="entry name" value="Exonuc_VII_ssu_sf"/>
</dbReference>
<dbReference type="NCBIfam" id="TIGR01280">
    <property type="entry name" value="xseB"/>
    <property type="match status" value="1"/>
</dbReference>
<dbReference type="PANTHER" id="PTHR34137">
    <property type="entry name" value="EXODEOXYRIBONUCLEASE 7 SMALL SUBUNIT"/>
    <property type="match status" value="1"/>
</dbReference>
<dbReference type="PANTHER" id="PTHR34137:SF1">
    <property type="entry name" value="EXODEOXYRIBONUCLEASE 7 SMALL SUBUNIT"/>
    <property type="match status" value="1"/>
</dbReference>
<dbReference type="Pfam" id="PF02609">
    <property type="entry name" value="Exonuc_VII_S"/>
    <property type="match status" value="1"/>
</dbReference>
<dbReference type="SUPFAM" id="SSF116842">
    <property type="entry name" value="XseB-like"/>
    <property type="match status" value="1"/>
</dbReference>
<keyword id="KW-0963">Cytoplasm</keyword>
<keyword id="KW-0269">Exonuclease</keyword>
<keyword id="KW-0378">Hydrolase</keyword>
<keyword id="KW-0540">Nuclease</keyword>
<keyword id="KW-1185">Reference proteome</keyword>
<accession>A1BJ57</accession>
<reference key="1">
    <citation type="submission" date="2006-12" db="EMBL/GenBank/DDBJ databases">
        <title>Complete sequence of Chlorobium phaeobacteroides DSM 266.</title>
        <authorList>
            <consortium name="US DOE Joint Genome Institute"/>
            <person name="Copeland A."/>
            <person name="Lucas S."/>
            <person name="Lapidus A."/>
            <person name="Barry K."/>
            <person name="Detter J.C."/>
            <person name="Glavina del Rio T."/>
            <person name="Hammon N."/>
            <person name="Israni S."/>
            <person name="Pitluck S."/>
            <person name="Goltsman E."/>
            <person name="Schmutz J."/>
            <person name="Larimer F."/>
            <person name="Land M."/>
            <person name="Hauser L."/>
            <person name="Mikhailova N."/>
            <person name="Li T."/>
            <person name="Overmann J."/>
            <person name="Bryant D.A."/>
            <person name="Richardson P."/>
        </authorList>
    </citation>
    <scope>NUCLEOTIDE SEQUENCE [LARGE SCALE GENOMIC DNA]</scope>
    <source>
        <strain>DSM 266 / SMG 266 / 2430</strain>
    </source>
</reference>
<name>EX7S_CHLPD</name>
<feature type="chain" id="PRO_0000303700" description="Exodeoxyribonuclease 7 small subunit">
    <location>
        <begin position="1"/>
        <end position="89"/>
    </location>
</feature>
<organism>
    <name type="scientific">Chlorobium phaeobacteroides (strain DSM 266 / SMG 266 / 2430)</name>
    <dbReference type="NCBI Taxonomy" id="290317"/>
    <lineage>
        <taxon>Bacteria</taxon>
        <taxon>Pseudomonadati</taxon>
        <taxon>Chlorobiota</taxon>
        <taxon>Chlorobiia</taxon>
        <taxon>Chlorobiales</taxon>
        <taxon>Chlorobiaceae</taxon>
        <taxon>Chlorobium/Pelodictyon group</taxon>
        <taxon>Chlorobium</taxon>
    </lineage>
</organism>
<gene>
    <name evidence="1" type="primary">xseB</name>
    <name type="ordered locus">Cpha266_2446</name>
</gene>
<proteinExistence type="inferred from homology"/>
<comment type="function">
    <text evidence="1">Bidirectionally degrades single-stranded DNA into large acid-insoluble oligonucleotides, which are then degraded further into small acid-soluble oligonucleotides.</text>
</comment>
<comment type="catalytic activity">
    <reaction evidence="1">
        <text>Exonucleolytic cleavage in either 5'- to 3'- or 3'- to 5'-direction to yield nucleoside 5'-phosphates.</text>
        <dbReference type="EC" id="3.1.11.6"/>
    </reaction>
</comment>
<comment type="subunit">
    <text evidence="1">Heterooligomer composed of large and small subunits.</text>
</comment>
<comment type="subcellular location">
    <subcellularLocation>
        <location evidence="1">Cytoplasm</location>
    </subcellularLocation>
</comment>
<comment type="similarity">
    <text evidence="1">Belongs to the XseB family.</text>
</comment>
<evidence type="ECO:0000255" key="1">
    <source>
        <dbReference type="HAMAP-Rule" id="MF_00337"/>
    </source>
</evidence>
<sequence>MAVTSAKKNPGSPGIEELISRLEEITRNIENPETGIENSIALYEEGLAIAEQCKKRLQEARKKIEIINPELAKNWPDTARNRDLFDSEI</sequence>
<protein>
    <recommendedName>
        <fullName evidence="1">Exodeoxyribonuclease 7 small subunit</fullName>
        <ecNumber evidence="1">3.1.11.6</ecNumber>
    </recommendedName>
    <alternativeName>
        <fullName evidence="1">Exodeoxyribonuclease VII small subunit</fullName>
        <shortName evidence="1">Exonuclease VII small subunit</shortName>
    </alternativeName>
</protein>